<reference key="1">
    <citation type="journal article" date="1990" name="Virology">
        <title>The complete DNA sequence of vaccinia virus.</title>
        <authorList>
            <person name="Goebel S.J."/>
            <person name="Johnson G.P."/>
            <person name="Perkus M.E."/>
            <person name="Davis S.W."/>
            <person name="Winslow J.P."/>
            <person name="Paoletti E."/>
        </authorList>
    </citation>
    <scope>NUCLEOTIDE SEQUENCE [LARGE SCALE GENOMIC DNA]</scope>
</reference>
<reference key="2">
    <citation type="journal article" date="1990" name="Virology">
        <title>Appendix to 'The complete DNA sequence of vaccinia virus'.</title>
        <authorList>
            <person name="Goebel S.J."/>
            <person name="Johnson G.P."/>
            <person name="Perkus M.E."/>
            <person name="Davis S.W."/>
            <person name="Winslow J.P."/>
            <person name="Paoletti E."/>
        </authorList>
    </citation>
    <scope>NUCLEOTIDE SEQUENCE [LARGE SCALE GENOMIC DNA]</scope>
</reference>
<dbReference type="EMBL" id="M35027">
    <property type="protein sequence ID" value="AAA47986.1"/>
    <property type="molecule type" value="Genomic_DNA"/>
</dbReference>
<dbReference type="PIR" id="D42503">
    <property type="entry name" value="D42503"/>
</dbReference>
<dbReference type="SMR" id="P21043"/>
<dbReference type="Proteomes" id="UP000008269">
    <property type="component" value="Segment"/>
</dbReference>
<dbReference type="InterPro" id="IPR005004">
    <property type="entry name" value="Poxvirus_C4/C10"/>
</dbReference>
<dbReference type="Pfam" id="PF03336">
    <property type="entry name" value="Pox_C4_C10"/>
    <property type="match status" value="1"/>
</dbReference>
<dbReference type="PIRSF" id="PIRSF003698">
    <property type="entry name" value="VAC_C10L"/>
    <property type="match status" value="1"/>
</dbReference>
<protein>
    <recommendedName>
        <fullName>Protein C10</fullName>
    </recommendedName>
</protein>
<evidence type="ECO:0000305" key="1"/>
<keyword id="KW-1185">Reference proteome</keyword>
<proteinExistence type="inferred from homology"/>
<feature type="chain" id="PRO_0000099409" description="Protein C10">
    <location>
        <begin position="1"/>
        <end position="331"/>
    </location>
</feature>
<accession>P21043</accession>
<organism>
    <name type="scientific">Vaccinia virus (strain Copenhagen)</name>
    <name type="common">VACV</name>
    <dbReference type="NCBI Taxonomy" id="10249"/>
    <lineage>
        <taxon>Viruses</taxon>
        <taxon>Varidnaviria</taxon>
        <taxon>Bamfordvirae</taxon>
        <taxon>Nucleocytoviricota</taxon>
        <taxon>Pokkesviricetes</taxon>
        <taxon>Chitovirales</taxon>
        <taxon>Poxviridae</taxon>
        <taxon>Chordopoxvirinae</taxon>
        <taxon>Orthopoxvirus</taxon>
        <taxon>Vaccinia virus</taxon>
    </lineage>
</organism>
<organismHost>
    <name type="scientific">Homo sapiens</name>
    <name type="common">Human</name>
    <dbReference type="NCBI Taxonomy" id="9606"/>
</organismHost>
<comment type="similarity">
    <text evidence="1">Belongs to the poxviridae C4/C10 protein family.</text>
</comment>
<gene>
    <name type="ORF">C10L</name>
</gene>
<name>C10_VACCC</name>
<sequence length="331" mass="38502">MDIYDDKGLQTIKLFNNEFDCIRNDIRELFKHVTDSDSIQLPMEDNSDIIENIRKILYRRLKNVECVDIDSTITFMKYDPNDDNKRTCSNWVPLTNNYMEYCLVIYLETPICGGKIKLYHPTGNIKSDKDIMFAKTLDFKSKKVLTGRKTIAVLDISVSYNRSITTIHYNDDVNIDIHTDKNGKELCYCYITIDDHYLVDVETIGVIVNRSGKCLLVNNHLGIGIVKDKRISDSFGDVCMDTIFDFSEARELFSLTNDDNRNIAWDTDKLDDDTDIWTPVTEDDYKFLSRLVLYAKSQSDTVFDYYVLTGDTEPPTVFIFKVTRFYFNMLK</sequence>